<evidence type="ECO:0000255" key="1">
    <source>
        <dbReference type="HAMAP-Rule" id="MF_00166"/>
    </source>
</evidence>
<evidence type="ECO:0000256" key="2">
    <source>
        <dbReference type="SAM" id="MobiDB-lite"/>
    </source>
</evidence>
<reference key="1">
    <citation type="journal article" date="2008" name="BMC Genomics">
        <title>Genomics of an extreme psychrophile, Psychromonas ingrahamii.</title>
        <authorList>
            <person name="Riley M."/>
            <person name="Staley J.T."/>
            <person name="Danchin A."/>
            <person name="Wang T.Z."/>
            <person name="Brettin T.S."/>
            <person name="Hauser L.J."/>
            <person name="Land M.L."/>
            <person name="Thompson L.S."/>
        </authorList>
    </citation>
    <scope>NUCLEOTIDE SEQUENCE [LARGE SCALE GENOMIC DNA]</scope>
    <source>
        <strain>DSM 17664 / CCUG 51855 / 37</strain>
    </source>
</reference>
<proteinExistence type="inferred from homology"/>
<protein>
    <recommendedName>
        <fullName evidence="1">DNA-binding protein Fis</fullName>
    </recommendedName>
</protein>
<organism>
    <name type="scientific">Psychromonas ingrahamii (strain DSM 17664 / CCUG 51855 / 37)</name>
    <dbReference type="NCBI Taxonomy" id="357804"/>
    <lineage>
        <taxon>Bacteria</taxon>
        <taxon>Pseudomonadati</taxon>
        <taxon>Pseudomonadota</taxon>
        <taxon>Gammaproteobacteria</taxon>
        <taxon>Alteromonadales</taxon>
        <taxon>Psychromonadaceae</taxon>
        <taxon>Psychromonas</taxon>
    </lineage>
</organism>
<accession>A1SZI8</accession>
<dbReference type="EMBL" id="CP000510">
    <property type="protein sequence ID" value="ABM04903.1"/>
    <property type="molecule type" value="Genomic_DNA"/>
</dbReference>
<dbReference type="RefSeq" id="WP_011771455.1">
    <property type="nucleotide sequence ID" value="NC_008709.1"/>
</dbReference>
<dbReference type="SMR" id="A1SZI8"/>
<dbReference type="STRING" id="357804.Ping_3216"/>
<dbReference type="KEGG" id="pin:Ping_3216"/>
<dbReference type="eggNOG" id="COG2901">
    <property type="taxonomic scope" value="Bacteria"/>
</dbReference>
<dbReference type="HOGENOM" id="CLU_158040_3_0_6"/>
<dbReference type="OrthoDB" id="9802388at2"/>
<dbReference type="Proteomes" id="UP000000639">
    <property type="component" value="Chromosome"/>
</dbReference>
<dbReference type="GO" id="GO:0003700">
    <property type="term" value="F:DNA-binding transcription factor activity"/>
    <property type="evidence" value="ECO:0007669"/>
    <property type="project" value="UniProtKB-UniRule"/>
</dbReference>
<dbReference type="GO" id="GO:0043565">
    <property type="term" value="F:sequence-specific DNA binding"/>
    <property type="evidence" value="ECO:0007669"/>
    <property type="project" value="InterPro"/>
</dbReference>
<dbReference type="FunFam" id="1.10.10.60:FF:000006">
    <property type="entry name" value="DNA-binding protein Fis"/>
    <property type="match status" value="1"/>
</dbReference>
<dbReference type="Gene3D" id="1.10.10.60">
    <property type="entry name" value="Homeodomain-like"/>
    <property type="match status" value="1"/>
</dbReference>
<dbReference type="HAMAP" id="MF_00166">
    <property type="entry name" value="DNA_binding_Fis"/>
    <property type="match status" value="1"/>
</dbReference>
<dbReference type="InterPro" id="IPR005412">
    <property type="entry name" value="Fis_DNA-bd"/>
</dbReference>
<dbReference type="InterPro" id="IPR009057">
    <property type="entry name" value="Homeodomain-like_sf"/>
</dbReference>
<dbReference type="InterPro" id="IPR002197">
    <property type="entry name" value="HTH_Fis"/>
</dbReference>
<dbReference type="InterPro" id="IPR050207">
    <property type="entry name" value="Trans_regulatory_Fis"/>
</dbReference>
<dbReference type="NCBIfam" id="NF001659">
    <property type="entry name" value="PRK00430.1"/>
    <property type="match status" value="1"/>
</dbReference>
<dbReference type="PANTHER" id="PTHR47918">
    <property type="entry name" value="DNA-BINDING PROTEIN FIS"/>
    <property type="match status" value="1"/>
</dbReference>
<dbReference type="PANTHER" id="PTHR47918:SF1">
    <property type="entry name" value="DNA-BINDING PROTEIN FIS"/>
    <property type="match status" value="1"/>
</dbReference>
<dbReference type="Pfam" id="PF02954">
    <property type="entry name" value="HTH_8"/>
    <property type="match status" value="1"/>
</dbReference>
<dbReference type="PIRSF" id="PIRSF002097">
    <property type="entry name" value="DNA-binding_Fis"/>
    <property type="match status" value="1"/>
</dbReference>
<dbReference type="PRINTS" id="PR01591">
    <property type="entry name" value="DNABINDNGFIS"/>
</dbReference>
<dbReference type="PRINTS" id="PR01590">
    <property type="entry name" value="HTHFIS"/>
</dbReference>
<dbReference type="SUPFAM" id="SSF46689">
    <property type="entry name" value="Homeodomain-like"/>
    <property type="match status" value="1"/>
</dbReference>
<gene>
    <name evidence="1" type="primary">fis</name>
    <name type="ordered locus">Ping_3216</name>
</gene>
<name>FIS_PSYIN</name>
<sequence>MFEQKISSEALTTTTSIPATGQITQRPLRDSVRQAVSGYVAQLNGQDPTELYELVLSEVEAPLLDIIMQYTRGNQTRAATMLGINRGTLRKKLKKYGMG</sequence>
<feature type="chain" id="PRO_1000023332" description="DNA-binding protein Fis">
    <location>
        <begin position="1"/>
        <end position="99"/>
    </location>
</feature>
<feature type="DNA-binding region" description="H-T-H motif" evidence="1">
    <location>
        <begin position="75"/>
        <end position="94"/>
    </location>
</feature>
<feature type="region of interest" description="Disordered" evidence="2">
    <location>
        <begin position="1"/>
        <end position="25"/>
    </location>
</feature>
<comment type="function">
    <text evidence="1">Activates ribosomal RNA transcription. Plays a direct role in upstream activation of rRNA promoters.</text>
</comment>
<comment type="subunit">
    <text evidence="1">Homodimer.</text>
</comment>
<comment type="similarity">
    <text evidence="1">Belongs to the transcriptional regulatory Fis family.</text>
</comment>
<keyword id="KW-0010">Activator</keyword>
<keyword id="KW-0238">DNA-binding</keyword>
<keyword id="KW-1185">Reference proteome</keyword>
<keyword id="KW-0804">Transcription</keyword>
<keyword id="KW-0805">Transcription regulation</keyword>